<name>END4_CHLTB</name>
<accession>B0BA79</accession>
<protein>
    <recommendedName>
        <fullName evidence="1">Probable endonuclease 4</fullName>
        <ecNumber evidence="1">3.1.21.2</ecNumber>
    </recommendedName>
    <alternativeName>
        <fullName evidence="1">Endodeoxyribonuclease IV</fullName>
    </alternativeName>
    <alternativeName>
        <fullName evidence="1">Endonuclease IV</fullName>
    </alternativeName>
</protein>
<organism>
    <name type="scientific">Chlamydia trachomatis serovar L2b (strain UCH-1/proctitis)</name>
    <dbReference type="NCBI Taxonomy" id="471473"/>
    <lineage>
        <taxon>Bacteria</taxon>
        <taxon>Pseudomonadati</taxon>
        <taxon>Chlamydiota</taxon>
        <taxon>Chlamydiia</taxon>
        <taxon>Chlamydiales</taxon>
        <taxon>Chlamydiaceae</taxon>
        <taxon>Chlamydia/Chlamydophila group</taxon>
        <taxon>Chlamydia</taxon>
    </lineage>
</organism>
<reference key="1">
    <citation type="journal article" date="2008" name="Genome Res.">
        <title>Chlamydia trachomatis: genome sequence analysis of lymphogranuloma venereum isolates.</title>
        <authorList>
            <person name="Thomson N.R."/>
            <person name="Holden M.T.G."/>
            <person name="Carder C."/>
            <person name="Lennard N."/>
            <person name="Lockey S.J."/>
            <person name="Marsh P."/>
            <person name="Skipp P."/>
            <person name="O'Connor C.D."/>
            <person name="Goodhead I."/>
            <person name="Norbertzcak H."/>
            <person name="Harris B."/>
            <person name="Ormond D."/>
            <person name="Rance R."/>
            <person name="Quail M.A."/>
            <person name="Parkhill J."/>
            <person name="Stephens R.S."/>
            <person name="Clarke I.N."/>
        </authorList>
    </citation>
    <scope>NUCLEOTIDE SEQUENCE [LARGE SCALE GENOMIC DNA]</scope>
    <source>
        <strain>UCH-1/proctitis</strain>
    </source>
</reference>
<sequence length="288" mass="31648">MFILPPPQEPLLGAHTSAAGGLHNALYEGRDIGATTVQLFTANQRQWKRRALTQEMVDQFRIALNETSLSYIMSHAGYLNNPGAPNPEILEKTRVCMHQEIADCISLGISFVNFHPGAALSDSKESCLDRAITSFSQMAPLFENHPPLVVLLETTAGQGSLIGSSFEELAYLIQGIKALIPIGVCLDTCHIFAAGYDISSVAGWEQVLKHFDAVIGLSFLRAIHLNDSVFALGKNKDRHAPIGEGCIGSDSFCFLMQDERTRMLPKYLETPGGPDLWTKEIRYLQKVC</sequence>
<gene>
    <name evidence="1" type="primary">nfo</name>
    <name type="ordered locus">CTLon_0883</name>
</gene>
<evidence type="ECO:0000255" key="1">
    <source>
        <dbReference type="HAMAP-Rule" id="MF_00152"/>
    </source>
</evidence>
<comment type="function">
    <text evidence="1">Endonuclease IV plays a role in DNA repair. It cleaves phosphodiester bonds at apurinic or apyrimidinic (AP) sites, generating a 3'-hydroxyl group and a 5'-terminal sugar phosphate.</text>
</comment>
<comment type="catalytic activity">
    <reaction evidence="1">
        <text>Endonucleolytic cleavage to 5'-phosphooligonucleotide end-products.</text>
        <dbReference type="EC" id="3.1.21.2"/>
    </reaction>
</comment>
<comment type="cofactor">
    <cofactor evidence="1">
        <name>Zn(2+)</name>
        <dbReference type="ChEBI" id="CHEBI:29105"/>
    </cofactor>
    <text evidence="1">Binds 3 Zn(2+) ions.</text>
</comment>
<comment type="similarity">
    <text evidence="1">Belongs to the AP endonuclease 2 family.</text>
</comment>
<keyword id="KW-0227">DNA damage</keyword>
<keyword id="KW-0234">DNA repair</keyword>
<keyword id="KW-0255">Endonuclease</keyword>
<keyword id="KW-0378">Hydrolase</keyword>
<keyword id="KW-0479">Metal-binding</keyword>
<keyword id="KW-0540">Nuclease</keyword>
<keyword id="KW-0862">Zinc</keyword>
<dbReference type="EC" id="3.1.21.2" evidence="1"/>
<dbReference type="EMBL" id="AM884177">
    <property type="protein sequence ID" value="CAP07280.1"/>
    <property type="molecule type" value="Genomic_DNA"/>
</dbReference>
<dbReference type="RefSeq" id="WP_009873956.1">
    <property type="nucleotide sequence ID" value="NC_010280.2"/>
</dbReference>
<dbReference type="SMR" id="B0BA79"/>
<dbReference type="KEGG" id="ctl:CTLon_0883"/>
<dbReference type="HOGENOM" id="CLU_025885_0_1_0"/>
<dbReference type="Proteomes" id="UP001154401">
    <property type="component" value="Chromosome"/>
</dbReference>
<dbReference type="GO" id="GO:0008833">
    <property type="term" value="F:deoxyribonuclease IV (phage-T4-induced) activity"/>
    <property type="evidence" value="ECO:0007669"/>
    <property type="project" value="UniProtKB-UniRule"/>
</dbReference>
<dbReference type="GO" id="GO:0003677">
    <property type="term" value="F:DNA binding"/>
    <property type="evidence" value="ECO:0007669"/>
    <property type="project" value="InterPro"/>
</dbReference>
<dbReference type="GO" id="GO:0003906">
    <property type="term" value="F:DNA-(apurinic or apyrimidinic site) endonuclease activity"/>
    <property type="evidence" value="ECO:0007669"/>
    <property type="project" value="TreeGrafter"/>
</dbReference>
<dbReference type="GO" id="GO:0008081">
    <property type="term" value="F:phosphoric diester hydrolase activity"/>
    <property type="evidence" value="ECO:0007669"/>
    <property type="project" value="TreeGrafter"/>
</dbReference>
<dbReference type="GO" id="GO:0008270">
    <property type="term" value="F:zinc ion binding"/>
    <property type="evidence" value="ECO:0007669"/>
    <property type="project" value="UniProtKB-UniRule"/>
</dbReference>
<dbReference type="GO" id="GO:0006284">
    <property type="term" value="P:base-excision repair"/>
    <property type="evidence" value="ECO:0007669"/>
    <property type="project" value="TreeGrafter"/>
</dbReference>
<dbReference type="CDD" id="cd00019">
    <property type="entry name" value="AP2Ec"/>
    <property type="match status" value="1"/>
</dbReference>
<dbReference type="FunFam" id="3.20.20.150:FF:000001">
    <property type="entry name" value="Probable endonuclease 4"/>
    <property type="match status" value="1"/>
</dbReference>
<dbReference type="Gene3D" id="3.20.20.150">
    <property type="entry name" value="Divalent-metal-dependent TIM barrel enzymes"/>
    <property type="match status" value="1"/>
</dbReference>
<dbReference type="HAMAP" id="MF_00152">
    <property type="entry name" value="Nfo"/>
    <property type="match status" value="1"/>
</dbReference>
<dbReference type="InterPro" id="IPR001719">
    <property type="entry name" value="AP_endonuc_2"/>
</dbReference>
<dbReference type="InterPro" id="IPR018246">
    <property type="entry name" value="AP_endonuc_F2_Zn_BS"/>
</dbReference>
<dbReference type="InterPro" id="IPR036237">
    <property type="entry name" value="Xyl_isomerase-like_sf"/>
</dbReference>
<dbReference type="InterPro" id="IPR013022">
    <property type="entry name" value="Xyl_isomerase-like_TIM-brl"/>
</dbReference>
<dbReference type="NCBIfam" id="TIGR00587">
    <property type="entry name" value="nfo"/>
    <property type="match status" value="1"/>
</dbReference>
<dbReference type="NCBIfam" id="NF002197">
    <property type="entry name" value="PRK01060.1-2"/>
    <property type="match status" value="1"/>
</dbReference>
<dbReference type="PANTHER" id="PTHR21445:SF0">
    <property type="entry name" value="APURINIC-APYRIMIDINIC ENDONUCLEASE"/>
    <property type="match status" value="1"/>
</dbReference>
<dbReference type="PANTHER" id="PTHR21445">
    <property type="entry name" value="ENDONUCLEASE IV ENDODEOXYRIBONUCLEASE IV"/>
    <property type="match status" value="1"/>
</dbReference>
<dbReference type="Pfam" id="PF01261">
    <property type="entry name" value="AP_endonuc_2"/>
    <property type="match status" value="1"/>
</dbReference>
<dbReference type="SMART" id="SM00518">
    <property type="entry name" value="AP2Ec"/>
    <property type="match status" value="1"/>
</dbReference>
<dbReference type="SUPFAM" id="SSF51658">
    <property type="entry name" value="Xylose isomerase-like"/>
    <property type="match status" value="1"/>
</dbReference>
<dbReference type="PROSITE" id="PS00729">
    <property type="entry name" value="AP_NUCLEASE_F2_1"/>
    <property type="match status" value="1"/>
</dbReference>
<dbReference type="PROSITE" id="PS00730">
    <property type="entry name" value="AP_NUCLEASE_F2_2"/>
    <property type="match status" value="1"/>
</dbReference>
<dbReference type="PROSITE" id="PS00731">
    <property type="entry name" value="AP_NUCLEASE_F2_3"/>
    <property type="match status" value="1"/>
</dbReference>
<dbReference type="PROSITE" id="PS51432">
    <property type="entry name" value="AP_NUCLEASE_F2_4"/>
    <property type="match status" value="1"/>
</dbReference>
<proteinExistence type="inferred from homology"/>
<feature type="chain" id="PRO_1000096875" description="Probable endonuclease 4">
    <location>
        <begin position="1"/>
        <end position="288"/>
    </location>
</feature>
<feature type="binding site" evidence="1">
    <location>
        <position position="75"/>
    </location>
    <ligand>
        <name>Zn(2+)</name>
        <dbReference type="ChEBI" id="CHEBI:29105"/>
        <label>1</label>
    </ligand>
</feature>
<feature type="binding site" evidence="1">
    <location>
        <position position="115"/>
    </location>
    <ligand>
        <name>Zn(2+)</name>
        <dbReference type="ChEBI" id="CHEBI:29105"/>
        <label>1</label>
    </ligand>
</feature>
<feature type="binding site" evidence="1">
    <location>
        <position position="153"/>
    </location>
    <ligand>
        <name>Zn(2+)</name>
        <dbReference type="ChEBI" id="CHEBI:29105"/>
        <label>1</label>
    </ligand>
</feature>
<feature type="binding site" evidence="1">
    <location>
        <position position="153"/>
    </location>
    <ligand>
        <name>Zn(2+)</name>
        <dbReference type="ChEBI" id="CHEBI:29105"/>
        <label>2</label>
    </ligand>
</feature>
<feature type="binding site" evidence="1">
    <location>
        <position position="187"/>
    </location>
    <ligand>
        <name>Zn(2+)</name>
        <dbReference type="ChEBI" id="CHEBI:29105"/>
        <label>2</label>
    </ligand>
</feature>
<feature type="binding site" evidence="1">
    <location>
        <position position="190"/>
    </location>
    <ligand>
        <name>Zn(2+)</name>
        <dbReference type="ChEBI" id="CHEBI:29105"/>
        <label>3</label>
    </ligand>
</feature>
<feature type="binding site" evidence="1">
    <location>
        <position position="224"/>
    </location>
    <ligand>
        <name>Zn(2+)</name>
        <dbReference type="ChEBI" id="CHEBI:29105"/>
        <label>2</label>
    </ligand>
</feature>
<feature type="binding site" evidence="1">
    <location>
        <position position="237"/>
    </location>
    <ligand>
        <name>Zn(2+)</name>
        <dbReference type="ChEBI" id="CHEBI:29105"/>
        <label>3</label>
    </ligand>
</feature>
<feature type="binding site" evidence="1">
    <location>
        <position position="239"/>
    </location>
    <ligand>
        <name>Zn(2+)</name>
        <dbReference type="ChEBI" id="CHEBI:29105"/>
        <label>3</label>
    </ligand>
</feature>
<feature type="binding site" evidence="1">
    <location>
        <position position="269"/>
    </location>
    <ligand>
        <name>Zn(2+)</name>
        <dbReference type="ChEBI" id="CHEBI:29105"/>
        <label>2</label>
    </ligand>
</feature>